<organism>
    <name type="scientific">Pyrobaculum islandicum (strain DSM 4184 / JCM 9189 / GEO3)</name>
    <dbReference type="NCBI Taxonomy" id="384616"/>
    <lineage>
        <taxon>Archaea</taxon>
        <taxon>Thermoproteota</taxon>
        <taxon>Thermoprotei</taxon>
        <taxon>Thermoproteales</taxon>
        <taxon>Thermoproteaceae</taxon>
        <taxon>Pyrobaculum</taxon>
    </lineage>
</organism>
<protein>
    <recommendedName>
        <fullName evidence="1">Glyceraldehyde-3-phosphate dehydrogenase</fullName>
        <shortName evidence="1">GAPDH</shortName>
        <ecNumber evidence="1">1.2.1.59</ecNumber>
    </recommendedName>
    <alternativeName>
        <fullName evidence="1">NAD(P)-dependent glyceraldehyde-3-phosphate dehydrogenase</fullName>
    </alternativeName>
</protein>
<comment type="catalytic activity">
    <reaction evidence="1">
        <text>D-glyceraldehyde 3-phosphate + phosphate + NADP(+) = (2R)-3-phospho-glyceroyl phosphate + NADPH + H(+)</text>
        <dbReference type="Rhea" id="RHEA:10296"/>
        <dbReference type="ChEBI" id="CHEBI:15378"/>
        <dbReference type="ChEBI" id="CHEBI:43474"/>
        <dbReference type="ChEBI" id="CHEBI:57604"/>
        <dbReference type="ChEBI" id="CHEBI:57783"/>
        <dbReference type="ChEBI" id="CHEBI:58349"/>
        <dbReference type="ChEBI" id="CHEBI:59776"/>
        <dbReference type="EC" id="1.2.1.59"/>
    </reaction>
</comment>
<comment type="catalytic activity">
    <reaction evidence="1">
        <text>D-glyceraldehyde 3-phosphate + phosphate + NAD(+) = (2R)-3-phospho-glyceroyl phosphate + NADH + H(+)</text>
        <dbReference type="Rhea" id="RHEA:10300"/>
        <dbReference type="ChEBI" id="CHEBI:15378"/>
        <dbReference type="ChEBI" id="CHEBI:43474"/>
        <dbReference type="ChEBI" id="CHEBI:57540"/>
        <dbReference type="ChEBI" id="CHEBI:57604"/>
        <dbReference type="ChEBI" id="CHEBI:57945"/>
        <dbReference type="ChEBI" id="CHEBI:59776"/>
        <dbReference type="EC" id="1.2.1.59"/>
    </reaction>
</comment>
<comment type="pathway">
    <text evidence="1">Carbohydrate degradation; glycolysis; pyruvate from D-glyceraldehyde 3-phosphate: step 1/5.</text>
</comment>
<comment type="subunit">
    <text evidence="1">Homotetramer.</text>
</comment>
<comment type="subcellular location">
    <subcellularLocation>
        <location evidence="1">Cytoplasm</location>
    </subcellularLocation>
</comment>
<comment type="similarity">
    <text evidence="1">Belongs to the glyceraldehyde-3-phosphate dehydrogenase family.</text>
</comment>
<feature type="chain" id="PRO_0000300977" description="Glyceraldehyde-3-phosphate dehydrogenase">
    <location>
        <begin position="1"/>
        <end position="344"/>
    </location>
</feature>
<feature type="active site" description="Nucleophile" evidence="1">
    <location>
        <position position="140"/>
    </location>
</feature>
<feature type="binding site" evidence="1">
    <location>
        <begin position="11"/>
        <end position="12"/>
    </location>
    <ligand>
        <name>NAD(+)</name>
        <dbReference type="ChEBI" id="CHEBI:57540"/>
    </ligand>
</feature>
<feature type="binding site" evidence="1">
    <location>
        <position position="110"/>
    </location>
    <ligand>
        <name>NAD(+)</name>
        <dbReference type="ChEBI" id="CHEBI:57540"/>
    </ligand>
</feature>
<feature type="binding site" evidence="1">
    <location>
        <begin position="139"/>
        <end position="141"/>
    </location>
    <ligand>
        <name>D-glyceraldehyde 3-phosphate</name>
        <dbReference type="ChEBI" id="CHEBI:59776"/>
    </ligand>
</feature>
<feature type="binding site" evidence="1">
    <location>
        <position position="169"/>
    </location>
    <ligand>
        <name>NAD(+)</name>
        <dbReference type="ChEBI" id="CHEBI:57540"/>
    </ligand>
</feature>
<feature type="binding site" evidence="1">
    <location>
        <begin position="195"/>
        <end position="196"/>
    </location>
    <ligand>
        <name>D-glyceraldehyde 3-phosphate</name>
        <dbReference type="ChEBI" id="CHEBI:59776"/>
    </ligand>
</feature>
<feature type="binding site" evidence="1">
    <location>
        <position position="302"/>
    </location>
    <ligand>
        <name>NAD(+)</name>
        <dbReference type="ChEBI" id="CHEBI:57540"/>
    </ligand>
</feature>
<accession>A1RV79</accession>
<proteinExistence type="inferred from homology"/>
<dbReference type="EC" id="1.2.1.59" evidence="1"/>
<dbReference type="EMBL" id="CP000504">
    <property type="protein sequence ID" value="ABL88861.1"/>
    <property type="molecule type" value="Genomic_DNA"/>
</dbReference>
<dbReference type="RefSeq" id="WP_011763436.1">
    <property type="nucleotide sequence ID" value="NC_008701.1"/>
</dbReference>
<dbReference type="SMR" id="A1RV79"/>
<dbReference type="STRING" id="384616.Pisl_1710"/>
<dbReference type="GeneID" id="4617093"/>
<dbReference type="KEGG" id="pis:Pisl_1710"/>
<dbReference type="eggNOG" id="arCOG00493">
    <property type="taxonomic scope" value="Archaea"/>
</dbReference>
<dbReference type="HOGENOM" id="CLU_069533_0_0_2"/>
<dbReference type="OrthoDB" id="295712at2157"/>
<dbReference type="UniPathway" id="UPA00109">
    <property type="reaction ID" value="UER00184"/>
</dbReference>
<dbReference type="Proteomes" id="UP000002595">
    <property type="component" value="Chromosome"/>
</dbReference>
<dbReference type="GO" id="GO:0005737">
    <property type="term" value="C:cytoplasm"/>
    <property type="evidence" value="ECO:0007669"/>
    <property type="project" value="UniProtKB-SubCell"/>
</dbReference>
<dbReference type="GO" id="GO:0008839">
    <property type="term" value="F:4-hydroxy-tetrahydrodipicolinate reductase"/>
    <property type="evidence" value="ECO:0007669"/>
    <property type="project" value="InterPro"/>
</dbReference>
<dbReference type="GO" id="GO:0004365">
    <property type="term" value="F:glyceraldehyde-3-phosphate dehydrogenase (NAD+) (phosphorylating) activity"/>
    <property type="evidence" value="ECO:0007669"/>
    <property type="project" value="UniProtKB-UniRule"/>
</dbReference>
<dbReference type="GO" id="GO:0047100">
    <property type="term" value="F:glyceraldehyde-3-phosphate dehydrogenase (NADP+) (phosphorylating) activity"/>
    <property type="evidence" value="ECO:0007669"/>
    <property type="project" value="RHEA"/>
</dbReference>
<dbReference type="GO" id="GO:0051287">
    <property type="term" value="F:NAD binding"/>
    <property type="evidence" value="ECO:0007669"/>
    <property type="project" value="InterPro"/>
</dbReference>
<dbReference type="GO" id="GO:0050661">
    <property type="term" value="F:NADP binding"/>
    <property type="evidence" value="ECO:0007669"/>
    <property type="project" value="InterPro"/>
</dbReference>
<dbReference type="GO" id="GO:0006096">
    <property type="term" value="P:glycolytic process"/>
    <property type="evidence" value="ECO:0007669"/>
    <property type="project" value="UniProtKB-UniRule"/>
</dbReference>
<dbReference type="GO" id="GO:0009089">
    <property type="term" value="P:lysine biosynthetic process via diaminopimelate"/>
    <property type="evidence" value="ECO:0007669"/>
    <property type="project" value="InterPro"/>
</dbReference>
<dbReference type="CDD" id="cd18127">
    <property type="entry name" value="GAPDH_II_C"/>
    <property type="match status" value="1"/>
</dbReference>
<dbReference type="CDD" id="cd02278">
    <property type="entry name" value="GAPDH_II_N"/>
    <property type="match status" value="1"/>
</dbReference>
<dbReference type="Gene3D" id="3.30.360.10">
    <property type="entry name" value="Dihydrodipicolinate Reductase, domain 2"/>
    <property type="match status" value="1"/>
</dbReference>
<dbReference type="Gene3D" id="3.40.50.720">
    <property type="entry name" value="NAD(P)-binding Rossmann-like Domain"/>
    <property type="match status" value="1"/>
</dbReference>
<dbReference type="HAMAP" id="MF_00559">
    <property type="entry name" value="G3P_dehdrog_arch"/>
    <property type="match status" value="1"/>
</dbReference>
<dbReference type="InterPro" id="IPR000846">
    <property type="entry name" value="DapB_N"/>
</dbReference>
<dbReference type="InterPro" id="IPR020831">
    <property type="entry name" value="GlycerAld/Erythrose_P_DH"/>
</dbReference>
<dbReference type="InterPro" id="IPR020830">
    <property type="entry name" value="GlycerAld_3-P_DH_AS"/>
</dbReference>
<dbReference type="InterPro" id="IPR020829">
    <property type="entry name" value="GlycerAld_3-P_DH_cat"/>
</dbReference>
<dbReference type="InterPro" id="IPR020828">
    <property type="entry name" value="GlycerAld_3-P_DH_NAD(P)-bd"/>
</dbReference>
<dbReference type="InterPro" id="IPR006436">
    <property type="entry name" value="Glyceraldehyde-3-P_DH_2_arc"/>
</dbReference>
<dbReference type="InterPro" id="IPR036291">
    <property type="entry name" value="NAD(P)-bd_dom_sf"/>
</dbReference>
<dbReference type="NCBIfam" id="TIGR01546">
    <property type="entry name" value="GAPDH-II_archae"/>
    <property type="match status" value="1"/>
</dbReference>
<dbReference type="NCBIfam" id="NF003251">
    <property type="entry name" value="PRK04207.1"/>
    <property type="match status" value="1"/>
</dbReference>
<dbReference type="Pfam" id="PF01113">
    <property type="entry name" value="DapB_N"/>
    <property type="match status" value="1"/>
</dbReference>
<dbReference type="Pfam" id="PF02800">
    <property type="entry name" value="Gp_dh_C"/>
    <property type="match status" value="1"/>
</dbReference>
<dbReference type="PIRSF" id="PIRSF000149">
    <property type="entry name" value="GAP_DH"/>
    <property type="match status" value="1"/>
</dbReference>
<dbReference type="SMART" id="SM00846">
    <property type="entry name" value="Gp_dh_N"/>
    <property type="match status" value="1"/>
</dbReference>
<dbReference type="SUPFAM" id="SSF55347">
    <property type="entry name" value="Glyceraldehyde-3-phosphate dehydrogenase-like, C-terminal domain"/>
    <property type="match status" value="1"/>
</dbReference>
<dbReference type="SUPFAM" id="SSF51735">
    <property type="entry name" value="NAD(P)-binding Rossmann-fold domains"/>
    <property type="match status" value="1"/>
</dbReference>
<dbReference type="PROSITE" id="PS00071">
    <property type="entry name" value="GAPDH"/>
    <property type="match status" value="1"/>
</dbReference>
<keyword id="KW-0963">Cytoplasm</keyword>
<keyword id="KW-0324">Glycolysis</keyword>
<keyword id="KW-0520">NAD</keyword>
<keyword id="KW-0521">NADP</keyword>
<keyword id="KW-0560">Oxidoreductase</keyword>
<evidence type="ECO:0000255" key="1">
    <source>
        <dbReference type="HAMAP-Rule" id="MF_00559"/>
    </source>
</evidence>
<sequence>MIKVGIIGYGTIGKRIADAVAMQDDMKVVGVLKVTPDYEAKIALARGFPIYTYSDRFDKFKKAGIEPAGTIEDLIKASDIIIDASPEDVGRENKEKYYQRYDKPVIFQGGEEADVADVSFNALANYEEAKGRRYVRVVSCNTTGITRVLTSLILNGIGIKKARIFIARRGADPKEHKKGPINDVVPNPATVPSHHGPDVQTILKDIDIVTMAIAVPVTIMHMHMAYIELSSTYTKDAVIEAFVKTPRIFLADVGSGFQSLAHVIEYARDLGRSRSDFPEVAIFRDSVTIRGNELYLMYGVHQESIVVPENVDAIRAVLGILPKWRSIEKTDKTLKLITEGKVYG</sequence>
<name>G3P_PYRIL</name>
<gene>
    <name evidence="1" type="primary">gap</name>
    <name type="ordered locus">Pisl_1710</name>
</gene>
<reference key="1">
    <citation type="submission" date="2006-12" db="EMBL/GenBank/DDBJ databases">
        <title>Complete sequence of Pyrobaculum islandicum DSM 4184.</title>
        <authorList>
            <person name="Copeland A."/>
            <person name="Lucas S."/>
            <person name="Lapidus A."/>
            <person name="Barry K."/>
            <person name="Detter J.C."/>
            <person name="Glavina del Rio T."/>
            <person name="Dalin E."/>
            <person name="Tice H."/>
            <person name="Pitluck S."/>
            <person name="Meincke L."/>
            <person name="Brettin T."/>
            <person name="Bruce D."/>
            <person name="Han C."/>
            <person name="Tapia R."/>
            <person name="Gilna P."/>
            <person name="Schmutz J."/>
            <person name="Larimer F."/>
            <person name="Land M."/>
            <person name="Hauser L."/>
            <person name="Kyrpides N."/>
            <person name="Mikhailova N."/>
            <person name="Cozen A.E."/>
            <person name="Fitz-Gibbon S.T."/>
            <person name="House C.H."/>
            <person name="Saltikov C."/>
            <person name="Lowe T."/>
            <person name="Richardson P."/>
        </authorList>
    </citation>
    <scope>NUCLEOTIDE SEQUENCE [LARGE SCALE GENOMIC DNA]</scope>
    <source>
        <strain>DSM 4184 / JCM 9189 / GEO3</strain>
    </source>
</reference>